<keyword id="KW-0256">Endoplasmic reticulum</keyword>
<keyword id="KW-0325">Glycoprotein</keyword>
<keyword id="KW-0414">Isoprene biosynthesis</keyword>
<keyword id="KW-0472">Membrane</keyword>
<keyword id="KW-0521">NADP</keyword>
<keyword id="KW-0560">Oxidoreductase</keyword>
<keyword id="KW-1185">Reference proteome</keyword>
<keyword id="KW-0812">Transmembrane</keyword>
<keyword id="KW-1133">Transmembrane helix</keyword>
<organism>
    <name type="scientific">Zea mays</name>
    <name type="common">Maize</name>
    <dbReference type="NCBI Taxonomy" id="4577"/>
    <lineage>
        <taxon>Eukaryota</taxon>
        <taxon>Viridiplantae</taxon>
        <taxon>Streptophyta</taxon>
        <taxon>Embryophyta</taxon>
        <taxon>Tracheophyta</taxon>
        <taxon>Spermatophyta</taxon>
        <taxon>Magnoliopsida</taxon>
        <taxon>Liliopsida</taxon>
        <taxon>Poales</taxon>
        <taxon>Poaceae</taxon>
        <taxon>PACMAD clade</taxon>
        <taxon>Panicoideae</taxon>
        <taxon>Andropogonodae</taxon>
        <taxon>Andropogoneae</taxon>
        <taxon>Tripsacinae</taxon>
        <taxon>Zea</taxon>
    </lineage>
</organism>
<gene>
    <name type="primary">HMGR</name>
</gene>
<accession>O24594</accession>
<name>HMDH_MAIZE</name>
<sequence>MEVRGGVGQGSAARHPPAPEPSRAAARVQAGDALPLPIRHTNLIFSALFAASLAYLMRRWREKIRSSTPLHAVGLAEMLAIFGLVASLIYLLSFFGIAFVQSIVSSGDDDEDFLVGSGSSGSAAAPSRQHAQAPAPCELLGSPAAAPEKMPEDDEEIVASVVAGKVPSYALEARLGDCRRAAGIRREALRRITGRDIEGLPLDGFDYASILGQCCELPVGYVQLPVGVAGPLLLDGRRFYLPMATTEGCLVASTNRGCKAIAESGGATSVVLRDAMTRAPVARFPTARRAAELKAFLEDPANFDTLSVVFNRSSRFARLQGVQCAMAGRNLYMRFSCSTGDAMGMNMVSKGVQNVLDFLQDDFHDMDVISISGNFCSDKKPSAVNWIEGRGKSVVCEAVIGEEVVKKVLKTDVQSLVELNTIKNLAGSAVAGALGGFNAHASNIVTAIFIATGQDPAQNVESSHCITMLEPVNAGRDLHISVTMPSIEVGTVGGGTQLASQSACLDLLGVRGASRDRPGSNARLLATVVAGGVLAGELSLLSALAAGQLVKSHMKYNRSSKDVSSTTATEKTRQREVDV</sequence>
<reference key="1">
    <citation type="submission" date="1996-11" db="EMBL/GenBank/DDBJ databases">
        <authorList>
            <person name="Mayer M.J."/>
            <person name="Steel J."/>
            <person name="Bailey J.A."/>
            <person name="Hargreaves J.A."/>
        </authorList>
    </citation>
    <scope>NUCLEOTIDE SEQUENCE [GENOMIC DNA]</scope>
    <source>
        <strain>cv. LG 21-11</strain>
    </source>
</reference>
<comment type="function">
    <text>Catalyzes the synthesis of mevalonate. The specific precursor of all isoprenoid compounds present in plants.</text>
</comment>
<comment type="catalytic activity">
    <reaction evidence="3">
        <text>(R)-mevalonate + 2 NADP(+) + CoA = (3S)-3-hydroxy-3-methylglutaryl-CoA + 2 NADPH + 2 H(+)</text>
        <dbReference type="Rhea" id="RHEA:15989"/>
        <dbReference type="ChEBI" id="CHEBI:15378"/>
        <dbReference type="ChEBI" id="CHEBI:36464"/>
        <dbReference type="ChEBI" id="CHEBI:43074"/>
        <dbReference type="ChEBI" id="CHEBI:57287"/>
        <dbReference type="ChEBI" id="CHEBI:57783"/>
        <dbReference type="ChEBI" id="CHEBI:58349"/>
        <dbReference type="EC" id="1.1.1.34"/>
    </reaction>
</comment>
<comment type="pathway">
    <text>Metabolic intermediate biosynthesis; (R)-mevalonate biosynthesis; (R)-mevalonate from acetyl-CoA: step 3/3.</text>
</comment>
<comment type="subcellular location">
    <subcellularLocation>
        <location>Endoplasmic reticulum membrane</location>
        <topology>Multi-pass membrane protein</topology>
    </subcellularLocation>
</comment>
<comment type="similarity">
    <text evidence="5">Belongs to the HMG-CoA reductase family.</text>
</comment>
<evidence type="ECO:0000250" key="1"/>
<evidence type="ECO:0000255" key="2"/>
<evidence type="ECO:0000255" key="3">
    <source>
        <dbReference type="PROSITE-ProRule" id="PRU10003"/>
    </source>
</evidence>
<evidence type="ECO:0000256" key="4">
    <source>
        <dbReference type="SAM" id="MobiDB-lite"/>
    </source>
</evidence>
<evidence type="ECO:0000305" key="5"/>
<protein>
    <recommendedName>
        <fullName>3-hydroxy-3-methylglutaryl-coenzyme A reductase</fullName>
        <shortName>HMG-CoA reductase</shortName>
        <ecNumber>1.1.1.34</ecNumber>
    </recommendedName>
</protein>
<dbReference type="EC" id="1.1.1.34"/>
<dbReference type="EMBL" id="Y09238">
    <property type="protein sequence ID" value="CAA70440.1"/>
    <property type="molecule type" value="Genomic_DNA"/>
</dbReference>
<dbReference type="PIR" id="T04357">
    <property type="entry name" value="T04357"/>
</dbReference>
<dbReference type="SMR" id="O24594"/>
<dbReference type="FunCoup" id="O24594">
    <property type="interactions" value="47"/>
</dbReference>
<dbReference type="STRING" id="4577.O24594"/>
<dbReference type="GlyCosmos" id="O24594">
    <property type="glycosylation" value="2 sites, No reported glycans"/>
</dbReference>
<dbReference type="PaxDb" id="4577-GRMZM2G393337_P02"/>
<dbReference type="eggNOG" id="KOG2480">
    <property type="taxonomic scope" value="Eukaryota"/>
</dbReference>
<dbReference type="InParanoid" id="O24594"/>
<dbReference type="UniPathway" id="UPA00058">
    <property type="reaction ID" value="UER00103"/>
</dbReference>
<dbReference type="Proteomes" id="UP000007305">
    <property type="component" value="Unplaced"/>
</dbReference>
<dbReference type="ExpressionAtlas" id="O24594">
    <property type="expression patterns" value="baseline and differential"/>
</dbReference>
<dbReference type="GO" id="GO:0005789">
    <property type="term" value="C:endoplasmic reticulum membrane"/>
    <property type="evidence" value="ECO:0000318"/>
    <property type="project" value="GO_Central"/>
</dbReference>
<dbReference type="GO" id="GO:0005778">
    <property type="term" value="C:peroxisomal membrane"/>
    <property type="evidence" value="ECO:0000318"/>
    <property type="project" value="GO_Central"/>
</dbReference>
<dbReference type="GO" id="GO:0004420">
    <property type="term" value="F:hydroxymethylglutaryl-CoA reductase (NADPH) activity"/>
    <property type="evidence" value="ECO:0000318"/>
    <property type="project" value="GO_Central"/>
</dbReference>
<dbReference type="GO" id="GO:0015936">
    <property type="term" value="P:coenzyme A metabolic process"/>
    <property type="evidence" value="ECO:0007669"/>
    <property type="project" value="InterPro"/>
</dbReference>
<dbReference type="GO" id="GO:0008299">
    <property type="term" value="P:isoprenoid biosynthetic process"/>
    <property type="evidence" value="ECO:0000318"/>
    <property type="project" value="GO_Central"/>
</dbReference>
<dbReference type="GO" id="GO:0016126">
    <property type="term" value="P:sterol biosynthetic process"/>
    <property type="evidence" value="ECO:0000318"/>
    <property type="project" value="GO_Central"/>
</dbReference>
<dbReference type="CDD" id="cd00643">
    <property type="entry name" value="HMG-CoA_reductase_classI"/>
    <property type="match status" value="1"/>
</dbReference>
<dbReference type="FunFam" id="1.10.3270.10:FF:000002">
    <property type="entry name" value="3-hydroxy-3-methylglutaryl coenzyme A reductase"/>
    <property type="match status" value="1"/>
</dbReference>
<dbReference type="FunFam" id="3.30.70.420:FF:000001">
    <property type="entry name" value="3-hydroxy-3-methylglutaryl coenzyme A reductase"/>
    <property type="match status" value="1"/>
</dbReference>
<dbReference type="FunFam" id="3.90.770.10:FF:000001">
    <property type="entry name" value="3-hydroxy-3-methylglutaryl coenzyme A reductase"/>
    <property type="match status" value="1"/>
</dbReference>
<dbReference type="Gene3D" id="3.90.770.10">
    <property type="entry name" value="3-hydroxy-3-methylglutaryl-coenzyme A Reductase, Chain A, domain 2"/>
    <property type="match status" value="1"/>
</dbReference>
<dbReference type="Gene3D" id="1.10.3270.10">
    <property type="entry name" value="HMGR, N-terminal domain"/>
    <property type="match status" value="1"/>
</dbReference>
<dbReference type="Gene3D" id="3.30.70.420">
    <property type="entry name" value="Hydroxymethylglutaryl-CoA reductase, class I/II, NAD/NADP-binding domain"/>
    <property type="match status" value="1"/>
</dbReference>
<dbReference type="InterPro" id="IPR002202">
    <property type="entry name" value="HMG_CoA_Rdtase"/>
</dbReference>
<dbReference type="InterPro" id="IPR023074">
    <property type="entry name" value="HMG_CoA_Rdtase_cat_sf"/>
</dbReference>
<dbReference type="InterPro" id="IPR023076">
    <property type="entry name" value="HMG_CoA_Rdtase_CS"/>
</dbReference>
<dbReference type="InterPro" id="IPR004554">
    <property type="entry name" value="HMG_CoA_Rdtase_eu_arc"/>
</dbReference>
<dbReference type="InterPro" id="IPR023282">
    <property type="entry name" value="HMG_CoA_Rdtase_N"/>
</dbReference>
<dbReference type="InterPro" id="IPR009023">
    <property type="entry name" value="HMG_CoA_Rdtase_NAD(P)-bd_sf"/>
</dbReference>
<dbReference type="InterPro" id="IPR009029">
    <property type="entry name" value="HMG_CoA_Rdtase_sub-bd_dom_sf"/>
</dbReference>
<dbReference type="NCBIfam" id="TIGR00533">
    <property type="entry name" value="HMG_CoA_R_NADP"/>
    <property type="match status" value="1"/>
</dbReference>
<dbReference type="PANTHER" id="PTHR10572">
    <property type="entry name" value="3-HYDROXY-3-METHYLGLUTARYL-COENZYME A REDUCTASE"/>
    <property type="match status" value="1"/>
</dbReference>
<dbReference type="PANTHER" id="PTHR10572:SF24">
    <property type="entry name" value="3-HYDROXY-3-METHYLGLUTARYL-COENZYME A REDUCTASE"/>
    <property type="match status" value="1"/>
</dbReference>
<dbReference type="Pfam" id="PF00368">
    <property type="entry name" value="HMG-CoA_red"/>
    <property type="match status" value="1"/>
</dbReference>
<dbReference type="PRINTS" id="PR00071">
    <property type="entry name" value="HMGCOARDTASE"/>
</dbReference>
<dbReference type="SUPFAM" id="SSF55035">
    <property type="entry name" value="NAD-binding domain of HMG-CoA reductase"/>
    <property type="match status" value="1"/>
</dbReference>
<dbReference type="SUPFAM" id="SSF56542">
    <property type="entry name" value="Substrate-binding domain of HMG-CoA reductase"/>
    <property type="match status" value="1"/>
</dbReference>
<dbReference type="PROSITE" id="PS00066">
    <property type="entry name" value="HMG_COA_REDUCTASE_1"/>
    <property type="match status" value="1"/>
</dbReference>
<dbReference type="PROSITE" id="PS00318">
    <property type="entry name" value="HMG_COA_REDUCTASE_2"/>
    <property type="match status" value="1"/>
</dbReference>
<dbReference type="PROSITE" id="PS01192">
    <property type="entry name" value="HMG_COA_REDUCTASE_3"/>
    <property type="match status" value="1"/>
</dbReference>
<dbReference type="PROSITE" id="PS50065">
    <property type="entry name" value="HMG_COA_REDUCTASE_4"/>
    <property type="match status" value="1"/>
</dbReference>
<feature type="chain" id="PRO_0000114444" description="3-hydroxy-3-methylglutaryl-coenzyme A reductase">
    <location>
        <begin position="1"/>
        <end position="579"/>
    </location>
</feature>
<feature type="transmembrane region" description="Helical" evidence="2">
    <location>
        <begin position="36"/>
        <end position="56"/>
    </location>
</feature>
<feature type="transmembrane region" description="Helical" evidence="2">
    <location>
        <begin position="80"/>
        <end position="100"/>
    </location>
</feature>
<feature type="transmembrane region" description="Helical" evidence="2">
    <location>
        <begin position="524"/>
        <end position="544"/>
    </location>
</feature>
<feature type="region of interest" description="Disordered" evidence="4">
    <location>
        <begin position="1"/>
        <end position="22"/>
    </location>
</feature>
<feature type="region of interest" description="Linker" evidence="1">
    <location>
        <begin position="101"/>
        <end position="153"/>
    </location>
</feature>
<feature type="region of interest" description="Catalytic" evidence="1">
    <location>
        <begin position="154"/>
        <end position="579"/>
    </location>
</feature>
<feature type="region of interest" description="Disordered" evidence="4">
    <location>
        <begin position="555"/>
        <end position="579"/>
    </location>
</feature>
<feature type="compositionally biased region" description="Basic and acidic residues" evidence="4">
    <location>
        <begin position="570"/>
        <end position="579"/>
    </location>
</feature>
<feature type="active site" description="Charge relay system" evidence="1">
    <location>
        <position position="247"/>
    </location>
</feature>
<feature type="active site" description="Charge relay system" evidence="1">
    <location>
        <position position="379"/>
    </location>
</feature>
<feature type="active site" description="Charge relay system" evidence="1">
    <location>
        <position position="455"/>
    </location>
</feature>
<feature type="active site" description="Proton donor" evidence="3">
    <location>
        <position position="553"/>
    </location>
</feature>
<feature type="glycosylation site" description="N-linked (GlcNAc...) asparagine" evidence="2">
    <location>
        <position position="311"/>
    </location>
</feature>
<feature type="glycosylation site" description="N-linked (GlcNAc...) asparagine" evidence="2">
    <location>
        <position position="557"/>
    </location>
</feature>
<proteinExistence type="inferred from homology"/>